<comment type="function">
    <text evidence="1">Catalyzes the conversion of dihydroorotate to orotate with quinone as electron acceptor.</text>
</comment>
<comment type="catalytic activity">
    <reaction evidence="1">
        <text>(S)-dihydroorotate + a quinone = orotate + a quinol</text>
        <dbReference type="Rhea" id="RHEA:30187"/>
        <dbReference type="ChEBI" id="CHEBI:24646"/>
        <dbReference type="ChEBI" id="CHEBI:30839"/>
        <dbReference type="ChEBI" id="CHEBI:30864"/>
        <dbReference type="ChEBI" id="CHEBI:132124"/>
        <dbReference type="EC" id="1.3.5.2"/>
    </reaction>
</comment>
<comment type="cofactor">
    <cofactor evidence="1">
        <name>FMN</name>
        <dbReference type="ChEBI" id="CHEBI:58210"/>
    </cofactor>
    <text evidence="1">Binds 1 FMN per subunit.</text>
</comment>
<comment type="pathway">
    <text evidence="1">Pyrimidine metabolism; UMP biosynthesis via de novo pathway; orotate from (S)-dihydroorotate (quinone route): step 1/1.</text>
</comment>
<comment type="subunit">
    <text evidence="1">Monomer.</text>
</comment>
<comment type="subcellular location">
    <subcellularLocation>
        <location evidence="1">Cell membrane</location>
        <topology evidence="1">Peripheral membrane protein</topology>
    </subcellularLocation>
</comment>
<comment type="similarity">
    <text evidence="1">Belongs to the dihydroorotate dehydrogenase family. Type 2 subfamily.</text>
</comment>
<reference key="1">
    <citation type="journal article" date="2009" name="J. Bacteriol.">
        <title>Complete genome sequence of Rhodobacter sphaeroides KD131.</title>
        <authorList>
            <person name="Lim S.-K."/>
            <person name="Kim S.J."/>
            <person name="Cha S.H."/>
            <person name="Oh Y.-K."/>
            <person name="Rhee H.-J."/>
            <person name="Kim M.-S."/>
            <person name="Lee J.K."/>
        </authorList>
    </citation>
    <scope>NUCLEOTIDE SEQUENCE [LARGE SCALE GENOMIC DNA]</scope>
    <source>
        <strain>KD131 / KCTC 12085</strain>
    </source>
</reference>
<feature type="chain" id="PRO_1000195087" description="Dihydroorotate dehydrogenase (quinone)">
    <location>
        <begin position="1"/>
        <end position="354"/>
    </location>
</feature>
<feature type="active site" description="Nucleophile" evidence="1">
    <location>
        <position position="173"/>
    </location>
</feature>
<feature type="binding site" evidence="1">
    <location>
        <begin position="61"/>
        <end position="65"/>
    </location>
    <ligand>
        <name>FMN</name>
        <dbReference type="ChEBI" id="CHEBI:58210"/>
    </ligand>
</feature>
<feature type="binding site" evidence="1">
    <location>
        <position position="65"/>
    </location>
    <ligand>
        <name>substrate</name>
    </ligand>
</feature>
<feature type="binding site" evidence="1">
    <location>
        <position position="85"/>
    </location>
    <ligand>
        <name>FMN</name>
        <dbReference type="ChEBI" id="CHEBI:58210"/>
    </ligand>
</feature>
<feature type="binding site" evidence="1">
    <location>
        <begin position="110"/>
        <end position="114"/>
    </location>
    <ligand>
        <name>substrate</name>
    </ligand>
</feature>
<feature type="binding site" evidence="1">
    <location>
        <position position="139"/>
    </location>
    <ligand>
        <name>FMN</name>
        <dbReference type="ChEBI" id="CHEBI:58210"/>
    </ligand>
</feature>
<feature type="binding site" evidence="1">
    <location>
        <position position="170"/>
    </location>
    <ligand>
        <name>FMN</name>
        <dbReference type="ChEBI" id="CHEBI:58210"/>
    </ligand>
</feature>
<feature type="binding site" evidence="1">
    <location>
        <position position="170"/>
    </location>
    <ligand>
        <name>substrate</name>
    </ligand>
</feature>
<feature type="binding site" evidence="1">
    <location>
        <position position="175"/>
    </location>
    <ligand>
        <name>substrate</name>
    </ligand>
</feature>
<feature type="binding site" evidence="1">
    <location>
        <position position="211"/>
    </location>
    <ligand>
        <name>FMN</name>
        <dbReference type="ChEBI" id="CHEBI:58210"/>
    </ligand>
</feature>
<feature type="binding site" evidence="1">
    <location>
        <position position="239"/>
    </location>
    <ligand>
        <name>FMN</name>
        <dbReference type="ChEBI" id="CHEBI:58210"/>
    </ligand>
</feature>
<feature type="binding site" evidence="1">
    <location>
        <begin position="240"/>
        <end position="241"/>
    </location>
    <ligand>
        <name>substrate</name>
    </ligand>
</feature>
<feature type="binding site" evidence="1">
    <location>
        <position position="261"/>
    </location>
    <ligand>
        <name>FMN</name>
        <dbReference type="ChEBI" id="CHEBI:58210"/>
    </ligand>
</feature>
<feature type="binding site" evidence="1">
    <location>
        <position position="290"/>
    </location>
    <ligand>
        <name>FMN</name>
        <dbReference type="ChEBI" id="CHEBI:58210"/>
    </ligand>
</feature>
<feature type="binding site" evidence="1">
    <location>
        <begin position="311"/>
        <end position="312"/>
    </location>
    <ligand>
        <name>FMN</name>
        <dbReference type="ChEBI" id="CHEBI:58210"/>
    </ligand>
</feature>
<sequence>MNILERAALTALHRMDPEKAHSLSLSALRSGLVPLPGPVTSSRLATDVGGLVLPNPVGLAAGYDKNAVALAALMRAGFGFLEVGAATPRPQPGNPQPRLFRLTEDRAAINRFGFNNDGAATICARLAMRPRGAVPVGLNLGANKDSPDRAADFAAVLAACGPHADFATVNVSSPNTERLRDLQGRQALTALLEGVMQVQAGFARPVPVFLKIAPDLSDADLAEIAEVALASGIAGIVATNTTLARDGLRSAHARETGGLSGAPLFERSTRVLARLSELTEGRLPLIGVGGVASAEEAYAKIRAGASAVQLYTAMVYQGIGLAARIARGLDALLLRDGFGSVAEAVGTGRADWLT</sequence>
<dbReference type="EC" id="1.3.5.2" evidence="1"/>
<dbReference type="EMBL" id="CP001150">
    <property type="protein sequence ID" value="ACM02208.1"/>
    <property type="molecule type" value="Genomic_DNA"/>
</dbReference>
<dbReference type="RefSeq" id="WP_015921367.1">
    <property type="nucleotide sequence ID" value="NC_011963.1"/>
</dbReference>
<dbReference type="SMR" id="B9KNA2"/>
<dbReference type="GeneID" id="67447728"/>
<dbReference type="KEGG" id="rsk:RSKD131_2348"/>
<dbReference type="HOGENOM" id="CLU_013640_2_1_5"/>
<dbReference type="UniPathway" id="UPA00070">
    <property type="reaction ID" value="UER00946"/>
</dbReference>
<dbReference type="GO" id="GO:0005737">
    <property type="term" value="C:cytoplasm"/>
    <property type="evidence" value="ECO:0007669"/>
    <property type="project" value="InterPro"/>
</dbReference>
<dbReference type="GO" id="GO:0005886">
    <property type="term" value="C:plasma membrane"/>
    <property type="evidence" value="ECO:0007669"/>
    <property type="project" value="UniProtKB-SubCell"/>
</dbReference>
<dbReference type="GO" id="GO:0106430">
    <property type="term" value="F:dihydroorotate dehydrogenase (quinone) activity"/>
    <property type="evidence" value="ECO:0007669"/>
    <property type="project" value="UniProtKB-EC"/>
</dbReference>
<dbReference type="GO" id="GO:0006207">
    <property type="term" value="P:'de novo' pyrimidine nucleobase biosynthetic process"/>
    <property type="evidence" value="ECO:0007669"/>
    <property type="project" value="InterPro"/>
</dbReference>
<dbReference type="GO" id="GO:0044205">
    <property type="term" value="P:'de novo' UMP biosynthetic process"/>
    <property type="evidence" value="ECO:0007669"/>
    <property type="project" value="UniProtKB-UniRule"/>
</dbReference>
<dbReference type="CDD" id="cd04738">
    <property type="entry name" value="DHOD_2_like"/>
    <property type="match status" value="1"/>
</dbReference>
<dbReference type="Gene3D" id="3.20.20.70">
    <property type="entry name" value="Aldolase class I"/>
    <property type="match status" value="1"/>
</dbReference>
<dbReference type="HAMAP" id="MF_00225">
    <property type="entry name" value="DHO_dh_type2"/>
    <property type="match status" value="1"/>
</dbReference>
<dbReference type="InterPro" id="IPR013785">
    <property type="entry name" value="Aldolase_TIM"/>
</dbReference>
<dbReference type="InterPro" id="IPR050074">
    <property type="entry name" value="DHO_dehydrogenase"/>
</dbReference>
<dbReference type="InterPro" id="IPR012135">
    <property type="entry name" value="Dihydroorotate_DH_1_2"/>
</dbReference>
<dbReference type="InterPro" id="IPR005719">
    <property type="entry name" value="Dihydroorotate_DH_2"/>
</dbReference>
<dbReference type="InterPro" id="IPR005720">
    <property type="entry name" value="Dihydroorotate_DH_cat"/>
</dbReference>
<dbReference type="InterPro" id="IPR001295">
    <property type="entry name" value="Dihydroorotate_DH_CS"/>
</dbReference>
<dbReference type="NCBIfam" id="NF003645">
    <property type="entry name" value="PRK05286.1-2"/>
    <property type="match status" value="1"/>
</dbReference>
<dbReference type="NCBIfam" id="NF003652">
    <property type="entry name" value="PRK05286.2-5"/>
    <property type="match status" value="1"/>
</dbReference>
<dbReference type="NCBIfam" id="TIGR01036">
    <property type="entry name" value="pyrD_sub2"/>
    <property type="match status" value="1"/>
</dbReference>
<dbReference type="PANTHER" id="PTHR48109:SF4">
    <property type="entry name" value="DIHYDROOROTATE DEHYDROGENASE (QUINONE), MITOCHONDRIAL"/>
    <property type="match status" value="1"/>
</dbReference>
<dbReference type="PANTHER" id="PTHR48109">
    <property type="entry name" value="DIHYDROOROTATE DEHYDROGENASE (QUINONE), MITOCHONDRIAL-RELATED"/>
    <property type="match status" value="1"/>
</dbReference>
<dbReference type="Pfam" id="PF01180">
    <property type="entry name" value="DHO_dh"/>
    <property type="match status" value="1"/>
</dbReference>
<dbReference type="PIRSF" id="PIRSF000164">
    <property type="entry name" value="DHO_oxidase"/>
    <property type="match status" value="1"/>
</dbReference>
<dbReference type="SUPFAM" id="SSF51395">
    <property type="entry name" value="FMN-linked oxidoreductases"/>
    <property type="match status" value="1"/>
</dbReference>
<dbReference type="PROSITE" id="PS00911">
    <property type="entry name" value="DHODEHASE_1"/>
    <property type="match status" value="1"/>
</dbReference>
<dbReference type="PROSITE" id="PS00912">
    <property type="entry name" value="DHODEHASE_2"/>
    <property type="match status" value="1"/>
</dbReference>
<evidence type="ECO:0000255" key="1">
    <source>
        <dbReference type="HAMAP-Rule" id="MF_00225"/>
    </source>
</evidence>
<keyword id="KW-1003">Cell membrane</keyword>
<keyword id="KW-0285">Flavoprotein</keyword>
<keyword id="KW-0288">FMN</keyword>
<keyword id="KW-0472">Membrane</keyword>
<keyword id="KW-0560">Oxidoreductase</keyword>
<keyword id="KW-0665">Pyrimidine biosynthesis</keyword>
<protein>
    <recommendedName>
        <fullName evidence="1">Dihydroorotate dehydrogenase (quinone)</fullName>
        <ecNumber evidence="1">1.3.5.2</ecNumber>
    </recommendedName>
    <alternativeName>
        <fullName evidence="1">DHOdehase</fullName>
        <shortName evidence="1">DHOD</shortName>
        <shortName evidence="1">DHODase</shortName>
    </alternativeName>
    <alternativeName>
        <fullName evidence="1">Dihydroorotate oxidase</fullName>
    </alternativeName>
</protein>
<name>PYRD_CERSK</name>
<gene>
    <name evidence="1" type="primary">pyrD</name>
    <name type="ordered locus">RSKD131_2348</name>
</gene>
<accession>B9KNA2</accession>
<organism>
    <name type="scientific">Cereibacter sphaeroides (strain KD131 / KCTC 12085)</name>
    <name type="common">Rhodobacter sphaeroides</name>
    <dbReference type="NCBI Taxonomy" id="557760"/>
    <lineage>
        <taxon>Bacteria</taxon>
        <taxon>Pseudomonadati</taxon>
        <taxon>Pseudomonadota</taxon>
        <taxon>Alphaproteobacteria</taxon>
        <taxon>Rhodobacterales</taxon>
        <taxon>Paracoccaceae</taxon>
        <taxon>Cereibacter</taxon>
    </lineage>
</organism>
<proteinExistence type="inferred from homology"/>